<gene>
    <name evidence="1" type="primary">petG</name>
    <name type="synonym">petE</name>
    <name type="ORF">PA082</name>
</gene>
<evidence type="ECO:0000255" key="1">
    <source>
        <dbReference type="HAMAP-Rule" id="MF_00432"/>
    </source>
</evidence>
<evidence type="ECO:0000305" key="2"/>
<organism>
    <name type="scientific">Oryza sativa</name>
    <name type="common">Rice</name>
    <dbReference type="NCBI Taxonomy" id="4530"/>
    <lineage>
        <taxon>Eukaryota</taxon>
        <taxon>Viridiplantae</taxon>
        <taxon>Streptophyta</taxon>
        <taxon>Embryophyta</taxon>
        <taxon>Tracheophyta</taxon>
        <taxon>Spermatophyta</taxon>
        <taxon>Magnoliopsida</taxon>
        <taxon>Liliopsida</taxon>
        <taxon>Poales</taxon>
        <taxon>Poaceae</taxon>
        <taxon>BOP clade</taxon>
        <taxon>Oryzoideae</taxon>
        <taxon>Oryzeae</taxon>
        <taxon>Oryzinae</taxon>
        <taxon>Oryza</taxon>
    </lineage>
</organism>
<proteinExistence type="inferred from homology"/>
<reference key="1">
    <citation type="journal article" date="2004" name="Plant Physiol.">
        <title>A comparison of rice chloroplast genomes.</title>
        <authorList>
            <person name="Tang J."/>
            <person name="Xia H."/>
            <person name="Cao M."/>
            <person name="Zhang X."/>
            <person name="Zeng W."/>
            <person name="Hu S."/>
            <person name="Tong W."/>
            <person name="Wang J."/>
            <person name="Wang J."/>
            <person name="Yu J."/>
            <person name="Yang H."/>
            <person name="Zhu L."/>
        </authorList>
    </citation>
    <scope>NUCLEOTIDE SEQUENCE [LARGE SCALE GENOMIC DNA]</scope>
    <source>
        <strain>cv. PA64s</strain>
    </source>
</reference>
<dbReference type="EMBL" id="AY522331">
    <property type="protein sequence ID" value="AAS46196.1"/>
    <property type="status" value="ALT_INIT"/>
    <property type="molecule type" value="Genomic_DNA"/>
</dbReference>
<dbReference type="RefSeq" id="YP_009305323.1">
    <property type="nucleotide sequence ID" value="NC_031333.1"/>
</dbReference>
<dbReference type="SMR" id="P0C390"/>
<dbReference type="GeneID" id="29141389"/>
<dbReference type="GO" id="GO:0009535">
    <property type="term" value="C:chloroplast thylakoid membrane"/>
    <property type="evidence" value="ECO:0007669"/>
    <property type="project" value="UniProtKB-SubCell"/>
</dbReference>
<dbReference type="GO" id="GO:0009512">
    <property type="term" value="C:cytochrome b6f complex"/>
    <property type="evidence" value="ECO:0007669"/>
    <property type="project" value="InterPro"/>
</dbReference>
<dbReference type="GO" id="GO:0009536">
    <property type="term" value="C:plastid"/>
    <property type="evidence" value="ECO:0000305"/>
    <property type="project" value="Gramene"/>
</dbReference>
<dbReference type="GO" id="GO:0045158">
    <property type="term" value="F:electron transporter, transferring electrons within cytochrome b6/f complex of photosystem II activity"/>
    <property type="evidence" value="ECO:0007669"/>
    <property type="project" value="UniProtKB-UniRule"/>
</dbReference>
<dbReference type="GO" id="GO:0017004">
    <property type="term" value="P:cytochrome complex assembly"/>
    <property type="evidence" value="ECO:0007669"/>
    <property type="project" value="UniProtKB-UniRule"/>
</dbReference>
<dbReference type="GO" id="GO:0015979">
    <property type="term" value="P:photosynthesis"/>
    <property type="evidence" value="ECO:0007669"/>
    <property type="project" value="UniProtKB-KW"/>
</dbReference>
<dbReference type="HAMAP" id="MF_00432">
    <property type="entry name" value="Cytb6_f_PetG"/>
    <property type="match status" value="1"/>
</dbReference>
<dbReference type="InterPro" id="IPR003683">
    <property type="entry name" value="Cyt_6/f_cplx_su5"/>
</dbReference>
<dbReference type="InterPro" id="IPR036099">
    <property type="entry name" value="Cyt_6/f_cplx_su5_sf"/>
</dbReference>
<dbReference type="NCBIfam" id="NF001907">
    <property type="entry name" value="PRK00665.1"/>
    <property type="match status" value="1"/>
</dbReference>
<dbReference type="Pfam" id="PF02529">
    <property type="entry name" value="PetG"/>
    <property type="match status" value="1"/>
</dbReference>
<dbReference type="PIRSF" id="PIRSF000034">
    <property type="entry name" value="Cyt_b6-f_V"/>
    <property type="match status" value="1"/>
</dbReference>
<dbReference type="SUPFAM" id="SSF103446">
    <property type="entry name" value="PetG subunit of the cytochrome b6f complex"/>
    <property type="match status" value="1"/>
</dbReference>
<geneLocation type="chloroplast"/>
<name>PETG_ORYSA</name>
<keyword id="KW-0150">Chloroplast</keyword>
<keyword id="KW-0249">Electron transport</keyword>
<keyword id="KW-0472">Membrane</keyword>
<keyword id="KW-0602">Photosynthesis</keyword>
<keyword id="KW-0934">Plastid</keyword>
<keyword id="KW-0793">Thylakoid</keyword>
<keyword id="KW-0812">Transmembrane</keyword>
<keyword id="KW-1133">Transmembrane helix</keyword>
<keyword id="KW-0813">Transport</keyword>
<accession>P0C390</accession>
<accession>P12121</accession>
<accession>P32973</accession>
<accession>P69459</accession>
<accession>Q6QXZ8</accession>
<accession>Q6QY62</accession>
<protein>
    <recommendedName>
        <fullName evidence="1">Cytochrome b6-f complex subunit 5</fullName>
    </recommendedName>
    <alternativeName>
        <fullName evidence="1">Cytochrome b6-f complex subunit PetG</fullName>
    </alternativeName>
    <alternativeName>
        <fullName evidence="1">Cytochrome b6-f complex subunit V</fullName>
    </alternativeName>
</protein>
<feature type="chain" id="PRO_0000216395" description="Cytochrome b6-f complex subunit 5">
    <location>
        <begin position="1"/>
        <end position="37"/>
    </location>
</feature>
<feature type="transmembrane region" description="Helical" evidence="1">
    <location>
        <begin position="5"/>
        <end position="25"/>
    </location>
</feature>
<comment type="function">
    <text evidence="1">Component of the cytochrome b6-f complex, which mediates electron transfer between photosystem II (PSII) and photosystem I (PSI), cyclic electron flow around PSI, and state transitions. PetG is required for either the stability or assembly of the cytochrome b6-f complex.</text>
</comment>
<comment type="subunit">
    <text evidence="1">The 4 large subunits of the cytochrome b6-f complex are cytochrome b6, subunit IV (17 kDa polypeptide, PetD), cytochrome f and the Rieske protein, while the 4 small subunits are PetG, PetL, PetM and PetN. The complex functions as a dimer.</text>
</comment>
<comment type="subcellular location">
    <subcellularLocation>
        <location evidence="1">Plastid</location>
        <location evidence="1">Chloroplast thylakoid membrane</location>
        <topology evidence="1">Single-pass membrane protein</topology>
    </subcellularLocation>
</comment>
<comment type="similarity">
    <text evidence="1">Belongs to the PetG family.</text>
</comment>
<comment type="sequence caution" evidence="2">
    <conflict type="erroneous initiation">
        <sequence resource="EMBL-CDS" id="AAS46196"/>
    </conflict>
</comment>
<sequence>MIEVFLFGIVLGLIPITLAGLFVTAYLQYRRGDQLDL</sequence>